<organism>
    <name type="scientific">Zymomonas mobilis subsp. mobilis (strain ATCC 31821 / ZM4 / CP4)</name>
    <dbReference type="NCBI Taxonomy" id="264203"/>
    <lineage>
        <taxon>Bacteria</taxon>
        <taxon>Pseudomonadati</taxon>
        <taxon>Pseudomonadota</taxon>
        <taxon>Alphaproteobacteria</taxon>
        <taxon>Sphingomonadales</taxon>
        <taxon>Zymomonadaceae</taxon>
        <taxon>Zymomonas</taxon>
    </lineage>
</organism>
<proteinExistence type="inferred from homology"/>
<evidence type="ECO:0000255" key="1">
    <source>
        <dbReference type="HAMAP-Rule" id="MF_01020"/>
    </source>
</evidence>
<gene>
    <name evidence="1" type="primary">hisE</name>
    <name type="ordered locus">ZMO1499</name>
</gene>
<comment type="catalytic activity">
    <reaction evidence="1">
        <text>1-(5-phospho-beta-D-ribosyl)-ATP + H2O = 1-(5-phospho-beta-D-ribosyl)-5'-AMP + diphosphate + H(+)</text>
        <dbReference type="Rhea" id="RHEA:22828"/>
        <dbReference type="ChEBI" id="CHEBI:15377"/>
        <dbReference type="ChEBI" id="CHEBI:15378"/>
        <dbReference type="ChEBI" id="CHEBI:33019"/>
        <dbReference type="ChEBI" id="CHEBI:59457"/>
        <dbReference type="ChEBI" id="CHEBI:73183"/>
        <dbReference type="EC" id="3.6.1.31"/>
    </reaction>
</comment>
<comment type="pathway">
    <text evidence="1">Amino-acid biosynthesis; L-histidine biosynthesis; L-histidine from 5-phospho-alpha-D-ribose 1-diphosphate: step 2/9.</text>
</comment>
<comment type="subcellular location">
    <subcellularLocation>
        <location evidence="1">Cytoplasm</location>
    </subcellularLocation>
</comment>
<comment type="similarity">
    <text evidence="1">Belongs to the PRA-PH family.</text>
</comment>
<reference key="1">
    <citation type="journal article" date="2005" name="Nat. Biotechnol.">
        <title>The genome sequence of the ethanologenic bacterium Zymomonas mobilis ZM4.</title>
        <authorList>
            <person name="Seo J.-S."/>
            <person name="Chong H."/>
            <person name="Park H.S."/>
            <person name="Yoon K.-O."/>
            <person name="Jung C."/>
            <person name="Kim J.J."/>
            <person name="Hong J.H."/>
            <person name="Kim H."/>
            <person name="Kim J.-H."/>
            <person name="Kil J.-I."/>
            <person name="Park C.J."/>
            <person name="Oh H.-M."/>
            <person name="Lee J.-S."/>
            <person name="Jin S.-J."/>
            <person name="Um H.-W."/>
            <person name="Lee H.-J."/>
            <person name="Oh S.-J."/>
            <person name="Kim J.Y."/>
            <person name="Kang H.L."/>
            <person name="Lee S.Y."/>
            <person name="Lee K.J."/>
            <person name="Kang H.S."/>
        </authorList>
    </citation>
    <scope>NUCLEOTIDE SEQUENCE [LARGE SCALE GENOMIC DNA]</scope>
    <source>
        <strain>ATCC 31821 / ZM4 / CP4</strain>
    </source>
</reference>
<keyword id="KW-0028">Amino-acid biosynthesis</keyword>
<keyword id="KW-0067">ATP-binding</keyword>
<keyword id="KW-0963">Cytoplasm</keyword>
<keyword id="KW-0368">Histidine biosynthesis</keyword>
<keyword id="KW-0378">Hydrolase</keyword>
<keyword id="KW-0547">Nucleotide-binding</keyword>
<keyword id="KW-1185">Reference proteome</keyword>
<accession>Q5NMD7</accession>
<sequence length="107" mass="11699">MSEETLAYIESVIAERRKASPEDSYVSSLFHRGTAHIAQKVGEEAVETVIAALAQDKKSLESEAADLIFHLAVLLADRGSSFENVFSELRRREGVSGHAEKAARPKS</sequence>
<name>HIS2_ZYMMO</name>
<feature type="chain" id="PRO_0000230195" description="Phosphoribosyl-ATP pyrophosphatase">
    <location>
        <begin position="1"/>
        <end position="107"/>
    </location>
</feature>
<dbReference type="EC" id="3.6.1.31" evidence="1"/>
<dbReference type="EMBL" id="AE008692">
    <property type="protein sequence ID" value="AAV90123.1"/>
    <property type="molecule type" value="Genomic_DNA"/>
</dbReference>
<dbReference type="RefSeq" id="WP_011241272.1">
    <property type="nucleotide sequence ID" value="NZ_CP035711.1"/>
</dbReference>
<dbReference type="SMR" id="Q5NMD7"/>
<dbReference type="STRING" id="264203.ZMO1499"/>
<dbReference type="KEGG" id="zmo:ZMO1499"/>
<dbReference type="eggNOG" id="COG0140">
    <property type="taxonomic scope" value="Bacteria"/>
</dbReference>
<dbReference type="HOGENOM" id="CLU_123337_1_2_5"/>
<dbReference type="UniPathway" id="UPA00031">
    <property type="reaction ID" value="UER00007"/>
</dbReference>
<dbReference type="Proteomes" id="UP000001173">
    <property type="component" value="Chromosome"/>
</dbReference>
<dbReference type="GO" id="GO:0005737">
    <property type="term" value="C:cytoplasm"/>
    <property type="evidence" value="ECO:0007669"/>
    <property type="project" value="UniProtKB-SubCell"/>
</dbReference>
<dbReference type="GO" id="GO:0005524">
    <property type="term" value="F:ATP binding"/>
    <property type="evidence" value="ECO:0007669"/>
    <property type="project" value="UniProtKB-KW"/>
</dbReference>
<dbReference type="GO" id="GO:0004636">
    <property type="term" value="F:phosphoribosyl-ATP diphosphatase activity"/>
    <property type="evidence" value="ECO:0007669"/>
    <property type="project" value="UniProtKB-UniRule"/>
</dbReference>
<dbReference type="GO" id="GO:0000105">
    <property type="term" value="P:L-histidine biosynthetic process"/>
    <property type="evidence" value="ECO:0007669"/>
    <property type="project" value="UniProtKB-UniRule"/>
</dbReference>
<dbReference type="CDD" id="cd11534">
    <property type="entry name" value="NTP-PPase_HisIE_like"/>
    <property type="match status" value="1"/>
</dbReference>
<dbReference type="Gene3D" id="1.10.287.1080">
    <property type="entry name" value="MazG-like"/>
    <property type="match status" value="1"/>
</dbReference>
<dbReference type="HAMAP" id="MF_01020">
    <property type="entry name" value="HisE"/>
    <property type="match status" value="1"/>
</dbReference>
<dbReference type="InterPro" id="IPR008179">
    <property type="entry name" value="HisE"/>
</dbReference>
<dbReference type="InterPro" id="IPR021130">
    <property type="entry name" value="PRib-ATP_PPHydrolase-like"/>
</dbReference>
<dbReference type="NCBIfam" id="TIGR03188">
    <property type="entry name" value="histidine_hisI"/>
    <property type="match status" value="1"/>
</dbReference>
<dbReference type="NCBIfam" id="NF001611">
    <property type="entry name" value="PRK00400.1-3"/>
    <property type="match status" value="1"/>
</dbReference>
<dbReference type="NCBIfam" id="NF001613">
    <property type="entry name" value="PRK00400.1-5"/>
    <property type="match status" value="1"/>
</dbReference>
<dbReference type="PANTHER" id="PTHR42945">
    <property type="entry name" value="HISTIDINE BIOSYNTHESIS BIFUNCTIONAL PROTEIN"/>
    <property type="match status" value="1"/>
</dbReference>
<dbReference type="PANTHER" id="PTHR42945:SF9">
    <property type="entry name" value="HISTIDINE BIOSYNTHESIS BIFUNCTIONAL PROTEIN HISIE"/>
    <property type="match status" value="1"/>
</dbReference>
<dbReference type="Pfam" id="PF01503">
    <property type="entry name" value="PRA-PH"/>
    <property type="match status" value="1"/>
</dbReference>
<dbReference type="SUPFAM" id="SSF101386">
    <property type="entry name" value="all-alpha NTP pyrophosphatases"/>
    <property type="match status" value="1"/>
</dbReference>
<protein>
    <recommendedName>
        <fullName evidence="1">Phosphoribosyl-ATP pyrophosphatase</fullName>
        <shortName evidence="1">PRA-PH</shortName>
        <ecNumber evidence="1">3.6.1.31</ecNumber>
    </recommendedName>
</protein>